<dbReference type="EMBL" id="AE010300">
    <property type="protein sequence ID" value="AAN48443.1"/>
    <property type="molecule type" value="Genomic_DNA"/>
</dbReference>
<dbReference type="RefSeq" id="NP_711425.1">
    <property type="nucleotide sequence ID" value="NC_004342.2"/>
</dbReference>
<dbReference type="RefSeq" id="WP_001136837.1">
    <property type="nucleotide sequence ID" value="NC_004342.2"/>
</dbReference>
<dbReference type="SMR" id="Q8F6Q7"/>
<dbReference type="FunCoup" id="Q8F6Q7">
    <property type="interactions" value="532"/>
</dbReference>
<dbReference type="STRING" id="189518.LA_1244"/>
<dbReference type="PaxDb" id="189518-LA_1244"/>
<dbReference type="EnsemblBacteria" id="AAN48443">
    <property type="protein sequence ID" value="AAN48443"/>
    <property type="gene ID" value="LA_1244"/>
</dbReference>
<dbReference type="GeneID" id="61142338"/>
<dbReference type="KEGG" id="lil:LA_1244"/>
<dbReference type="PATRIC" id="fig|189518.3.peg.1245"/>
<dbReference type="HOGENOM" id="CLU_123265_0_1_12"/>
<dbReference type="InParanoid" id="Q8F6Q7"/>
<dbReference type="OrthoDB" id="9808966at2"/>
<dbReference type="Proteomes" id="UP000001408">
    <property type="component" value="Chromosome I"/>
</dbReference>
<dbReference type="GO" id="GO:0022625">
    <property type="term" value="C:cytosolic large ribosomal subunit"/>
    <property type="evidence" value="ECO:0000318"/>
    <property type="project" value="GO_Central"/>
</dbReference>
<dbReference type="GO" id="GO:0019843">
    <property type="term" value="F:rRNA binding"/>
    <property type="evidence" value="ECO:0007669"/>
    <property type="project" value="UniProtKB-UniRule"/>
</dbReference>
<dbReference type="GO" id="GO:0003735">
    <property type="term" value="F:structural constituent of ribosome"/>
    <property type="evidence" value="ECO:0000318"/>
    <property type="project" value="GO_Central"/>
</dbReference>
<dbReference type="GO" id="GO:0000027">
    <property type="term" value="P:ribosomal large subunit assembly"/>
    <property type="evidence" value="ECO:0007669"/>
    <property type="project" value="UniProtKB-UniRule"/>
</dbReference>
<dbReference type="GO" id="GO:0006412">
    <property type="term" value="P:translation"/>
    <property type="evidence" value="ECO:0007669"/>
    <property type="project" value="InterPro"/>
</dbReference>
<dbReference type="CDD" id="cd07026">
    <property type="entry name" value="Ribosomal_L20"/>
    <property type="match status" value="1"/>
</dbReference>
<dbReference type="FunFam" id="1.10.1900.20:FF:000001">
    <property type="entry name" value="50S ribosomal protein L20"/>
    <property type="match status" value="1"/>
</dbReference>
<dbReference type="Gene3D" id="6.10.160.10">
    <property type="match status" value="1"/>
</dbReference>
<dbReference type="Gene3D" id="1.10.1900.20">
    <property type="entry name" value="Ribosomal protein L20"/>
    <property type="match status" value="1"/>
</dbReference>
<dbReference type="HAMAP" id="MF_00382">
    <property type="entry name" value="Ribosomal_bL20"/>
    <property type="match status" value="1"/>
</dbReference>
<dbReference type="InterPro" id="IPR005813">
    <property type="entry name" value="Ribosomal_bL20"/>
</dbReference>
<dbReference type="InterPro" id="IPR049946">
    <property type="entry name" value="RIBOSOMAL_L20_CS"/>
</dbReference>
<dbReference type="InterPro" id="IPR035566">
    <property type="entry name" value="Ribosomal_protein_bL20_C"/>
</dbReference>
<dbReference type="NCBIfam" id="TIGR01032">
    <property type="entry name" value="rplT_bact"/>
    <property type="match status" value="1"/>
</dbReference>
<dbReference type="PANTHER" id="PTHR10986">
    <property type="entry name" value="39S RIBOSOMAL PROTEIN L20"/>
    <property type="match status" value="1"/>
</dbReference>
<dbReference type="Pfam" id="PF00453">
    <property type="entry name" value="Ribosomal_L20"/>
    <property type="match status" value="1"/>
</dbReference>
<dbReference type="PRINTS" id="PR00062">
    <property type="entry name" value="RIBOSOMALL20"/>
</dbReference>
<dbReference type="SUPFAM" id="SSF74731">
    <property type="entry name" value="Ribosomal protein L20"/>
    <property type="match status" value="1"/>
</dbReference>
<dbReference type="PROSITE" id="PS00937">
    <property type="entry name" value="RIBOSOMAL_L20"/>
    <property type="match status" value="1"/>
</dbReference>
<protein>
    <recommendedName>
        <fullName evidence="1">Large ribosomal subunit protein bL20</fullName>
    </recommendedName>
    <alternativeName>
        <fullName evidence="2">50S ribosomal protein L20</fullName>
    </alternativeName>
</protein>
<proteinExistence type="inferred from homology"/>
<name>RL20_LEPIN</name>
<accession>Q8F6Q7</accession>
<organism>
    <name type="scientific">Leptospira interrogans serogroup Icterohaemorrhagiae serovar Lai (strain 56601)</name>
    <dbReference type="NCBI Taxonomy" id="189518"/>
    <lineage>
        <taxon>Bacteria</taxon>
        <taxon>Pseudomonadati</taxon>
        <taxon>Spirochaetota</taxon>
        <taxon>Spirochaetia</taxon>
        <taxon>Leptospirales</taxon>
        <taxon>Leptospiraceae</taxon>
        <taxon>Leptospira</taxon>
    </lineage>
</organism>
<feature type="chain" id="PRO_0000177173" description="Large ribosomal subunit protein bL20">
    <location>
        <begin position="1"/>
        <end position="117"/>
    </location>
</feature>
<gene>
    <name evidence="1" type="primary">rplT</name>
    <name type="ordered locus">LA_1244</name>
</gene>
<comment type="function">
    <text evidence="1">Binds directly to 23S ribosomal RNA and is necessary for the in vitro assembly process of the 50S ribosomal subunit. It is not involved in the protein synthesizing functions of that subunit.</text>
</comment>
<comment type="similarity">
    <text evidence="1">Belongs to the bacterial ribosomal protein bL20 family.</text>
</comment>
<evidence type="ECO:0000255" key="1">
    <source>
        <dbReference type="HAMAP-Rule" id="MF_00382"/>
    </source>
</evidence>
<evidence type="ECO:0000305" key="2"/>
<keyword id="KW-1185">Reference proteome</keyword>
<keyword id="KW-0687">Ribonucleoprotein</keyword>
<keyword id="KW-0689">Ribosomal protein</keyword>
<keyword id="KW-0694">RNA-binding</keyword>
<keyword id="KW-0699">rRNA-binding</keyword>
<reference key="1">
    <citation type="journal article" date="2003" name="Nature">
        <title>Unique physiological and pathogenic features of Leptospira interrogans revealed by whole-genome sequencing.</title>
        <authorList>
            <person name="Ren S.-X."/>
            <person name="Fu G."/>
            <person name="Jiang X.-G."/>
            <person name="Zeng R."/>
            <person name="Miao Y.-G."/>
            <person name="Xu H."/>
            <person name="Zhang Y.-X."/>
            <person name="Xiong H."/>
            <person name="Lu G."/>
            <person name="Lu L.-F."/>
            <person name="Jiang H.-Q."/>
            <person name="Jia J."/>
            <person name="Tu Y.-F."/>
            <person name="Jiang J.-X."/>
            <person name="Gu W.-Y."/>
            <person name="Zhang Y.-Q."/>
            <person name="Cai Z."/>
            <person name="Sheng H.-H."/>
            <person name="Yin H.-F."/>
            <person name="Zhang Y."/>
            <person name="Zhu G.-F."/>
            <person name="Wan M."/>
            <person name="Huang H.-L."/>
            <person name="Qian Z."/>
            <person name="Wang S.-Y."/>
            <person name="Ma W."/>
            <person name="Yao Z.-J."/>
            <person name="Shen Y."/>
            <person name="Qiang B.-Q."/>
            <person name="Xia Q.-C."/>
            <person name="Guo X.-K."/>
            <person name="Danchin A."/>
            <person name="Saint Girons I."/>
            <person name="Somerville R.L."/>
            <person name="Wen Y.-M."/>
            <person name="Shi M.-H."/>
            <person name="Chen Z."/>
            <person name="Xu J.-G."/>
            <person name="Zhao G.-P."/>
        </authorList>
    </citation>
    <scope>NUCLEOTIDE SEQUENCE [LARGE SCALE GENOMIC DNA]</scope>
    <source>
        <strain>56601</strain>
    </source>
</reference>
<sequence length="117" mass="13592">MPRAVNGTIHKNRRRRILKDAKGFRGARSKLYRTAKSAVMKAGQWAYRDRRAKKRDFRKLWIIRINAAARENGLSYSVFMNSLKKLGIHMDRKSLAELAFNDREVFNSLVEKIKVAG</sequence>